<dbReference type="EC" id="2.7.11.1" evidence="7 8 9 12"/>
<dbReference type="EMBL" id="U24167">
    <property type="protein sequence ID" value="AAA86529.1"/>
    <property type="molecule type" value="mRNA"/>
</dbReference>
<dbReference type="EMBL" id="Z46728">
    <property type="protein sequence ID" value="CAA86699.2"/>
    <property type="molecule type" value="Genomic_DNA"/>
</dbReference>
<dbReference type="EMBL" id="BK006942">
    <property type="protein sequence ID" value="DAA08458.1"/>
    <property type="molecule type" value="Genomic_DNA"/>
</dbReference>
<dbReference type="PIR" id="S50889">
    <property type="entry name" value="S50889"/>
</dbReference>
<dbReference type="RefSeq" id="NP_012171.1">
    <property type="nucleotide sequence ID" value="NM_001179443.1"/>
</dbReference>
<dbReference type="BMRB" id="P40494"/>
<dbReference type="SMR" id="P40494"/>
<dbReference type="BioGRID" id="34897">
    <property type="interactions" value="181"/>
</dbReference>
<dbReference type="DIP" id="DIP-6271N"/>
<dbReference type="FunCoup" id="P40494">
    <property type="interactions" value="350"/>
</dbReference>
<dbReference type="IntAct" id="P40494">
    <property type="interactions" value="38"/>
</dbReference>
<dbReference type="MINT" id="P40494"/>
<dbReference type="STRING" id="4932.YIL095W"/>
<dbReference type="GlyGen" id="P40494">
    <property type="glycosylation" value="2 sites, 1 O-linked glycan (2 sites)"/>
</dbReference>
<dbReference type="iPTMnet" id="P40494"/>
<dbReference type="PaxDb" id="4932-YIL095W"/>
<dbReference type="PeptideAtlas" id="P40494"/>
<dbReference type="EnsemblFungi" id="YIL095W_mRNA">
    <property type="protein sequence ID" value="YIL095W"/>
    <property type="gene ID" value="YIL095W"/>
</dbReference>
<dbReference type="GeneID" id="854713"/>
<dbReference type="KEGG" id="sce:YIL095W"/>
<dbReference type="AGR" id="SGD:S000001357"/>
<dbReference type="SGD" id="S000001357">
    <property type="gene designation" value="PRK1"/>
</dbReference>
<dbReference type="VEuPathDB" id="FungiDB:YIL095W"/>
<dbReference type="eggNOG" id="KOG1989">
    <property type="taxonomic scope" value="Eukaryota"/>
</dbReference>
<dbReference type="GeneTree" id="ENSGT00940000176643"/>
<dbReference type="HOGENOM" id="CLU_011638_2_0_1"/>
<dbReference type="InParanoid" id="P40494"/>
<dbReference type="OMA" id="QEFNYVQ"/>
<dbReference type="OrthoDB" id="2018507at2759"/>
<dbReference type="BioCyc" id="YEAST:G3O-31354-MONOMER"/>
<dbReference type="BioGRID-ORCS" id="854713">
    <property type="hits" value="0 hits in 13 CRISPR screens"/>
</dbReference>
<dbReference type="PRO" id="PR:P40494"/>
<dbReference type="Proteomes" id="UP000002311">
    <property type="component" value="Chromosome IX"/>
</dbReference>
<dbReference type="RNAct" id="P40494">
    <property type="molecule type" value="protein"/>
</dbReference>
<dbReference type="GO" id="GO:0030479">
    <property type="term" value="C:actin cortical patch"/>
    <property type="evidence" value="ECO:0000314"/>
    <property type="project" value="SGD"/>
</dbReference>
<dbReference type="GO" id="GO:0005737">
    <property type="term" value="C:cytoplasm"/>
    <property type="evidence" value="ECO:0000318"/>
    <property type="project" value="GO_Central"/>
</dbReference>
<dbReference type="GO" id="GO:0043332">
    <property type="term" value="C:mating projection tip"/>
    <property type="evidence" value="ECO:0007005"/>
    <property type="project" value="SGD"/>
</dbReference>
<dbReference type="GO" id="GO:0005524">
    <property type="term" value="F:ATP binding"/>
    <property type="evidence" value="ECO:0007669"/>
    <property type="project" value="UniProtKB-KW"/>
</dbReference>
<dbReference type="GO" id="GO:0004672">
    <property type="term" value="F:protein kinase activity"/>
    <property type="evidence" value="ECO:0007005"/>
    <property type="project" value="SGD"/>
</dbReference>
<dbReference type="GO" id="GO:0106310">
    <property type="term" value="F:protein serine kinase activity"/>
    <property type="evidence" value="ECO:0007669"/>
    <property type="project" value="RHEA"/>
</dbReference>
<dbReference type="GO" id="GO:0004674">
    <property type="term" value="F:protein serine/threonine kinase activity"/>
    <property type="evidence" value="ECO:0000314"/>
    <property type="project" value="SGD"/>
</dbReference>
<dbReference type="GO" id="GO:0000147">
    <property type="term" value="P:actin cortical patch assembly"/>
    <property type="evidence" value="ECO:0000315"/>
    <property type="project" value="SGD"/>
</dbReference>
<dbReference type="GO" id="GO:0007015">
    <property type="term" value="P:actin filament organization"/>
    <property type="evidence" value="ECO:0000318"/>
    <property type="project" value="GO_Central"/>
</dbReference>
<dbReference type="GO" id="GO:0120133">
    <property type="term" value="P:negative regulation of actin cortical patch assembly"/>
    <property type="evidence" value="ECO:0000316"/>
    <property type="project" value="SGD"/>
</dbReference>
<dbReference type="GO" id="GO:1900186">
    <property type="term" value="P:negative regulation of clathrin-dependent endocytosis"/>
    <property type="evidence" value="ECO:0000315"/>
    <property type="project" value="SGD"/>
</dbReference>
<dbReference type="GO" id="GO:0031333">
    <property type="term" value="P:negative regulation of protein-containing complex assembly"/>
    <property type="evidence" value="ECO:0000315"/>
    <property type="project" value="SGD"/>
</dbReference>
<dbReference type="CDD" id="cd14037">
    <property type="entry name" value="STKc_NAK_like"/>
    <property type="match status" value="1"/>
</dbReference>
<dbReference type="FunFam" id="1.10.510.10:FF:000441">
    <property type="entry name" value="Serine/threonine protein kinase"/>
    <property type="match status" value="1"/>
</dbReference>
<dbReference type="Gene3D" id="1.10.510.10">
    <property type="entry name" value="Transferase(Phosphotransferase) domain 1"/>
    <property type="match status" value="1"/>
</dbReference>
<dbReference type="InterPro" id="IPR011009">
    <property type="entry name" value="Kinase-like_dom_sf"/>
</dbReference>
<dbReference type="InterPro" id="IPR000719">
    <property type="entry name" value="Prot_kinase_dom"/>
</dbReference>
<dbReference type="InterPro" id="IPR008271">
    <property type="entry name" value="Ser/Thr_kinase_AS"/>
</dbReference>
<dbReference type="PANTHER" id="PTHR22967:SF57">
    <property type="entry name" value="AUXILIN, ISOFORM A-RELATED"/>
    <property type="match status" value="1"/>
</dbReference>
<dbReference type="PANTHER" id="PTHR22967">
    <property type="entry name" value="SERINE/THREONINE PROTEIN KINASE"/>
    <property type="match status" value="1"/>
</dbReference>
<dbReference type="Pfam" id="PF00069">
    <property type="entry name" value="Pkinase"/>
    <property type="match status" value="1"/>
</dbReference>
<dbReference type="SMART" id="SM00220">
    <property type="entry name" value="S_TKc"/>
    <property type="match status" value="1"/>
</dbReference>
<dbReference type="SUPFAM" id="SSF56112">
    <property type="entry name" value="Protein kinase-like (PK-like)"/>
    <property type="match status" value="1"/>
</dbReference>
<dbReference type="PROSITE" id="PS50011">
    <property type="entry name" value="PROTEIN_KINASE_DOM"/>
    <property type="match status" value="1"/>
</dbReference>
<dbReference type="PROSITE" id="PS00108">
    <property type="entry name" value="PROTEIN_KINASE_ST"/>
    <property type="match status" value="1"/>
</dbReference>
<name>PRK1_YEAST</name>
<proteinExistence type="evidence at protein level"/>
<keyword id="KW-0067">ATP-binding</keyword>
<keyword id="KW-0963">Cytoplasm</keyword>
<keyword id="KW-0206">Cytoskeleton</keyword>
<keyword id="KW-0418">Kinase</keyword>
<keyword id="KW-0547">Nucleotide-binding</keyword>
<keyword id="KW-0597">Phosphoprotein</keyword>
<keyword id="KW-1185">Reference proteome</keyword>
<keyword id="KW-0723">Serine/threonine-protein kinase</keyword>
<keyword id="KW-0808">Transferase</keyword>
<reference key="1">
    <citation type="journal article" date="1995" name="Proc. Natl. Acad. Sci. U.S.A.">
        <title>PAK1, a gene that can regulate p53 activity in yeast.</title>
        <authorList>
            <person name="Thiagalingam S."/>
            <person name="Kinzler K.W."/>
            <person name="Vogelstein B."/>
        </authorList>
    </citation>
    <scope>NUCLEOTIDE SEQUENCE [MRNA]</scope>
</reference>
<reference key="2">
    <citation type="journal article" date="1997" name="Nature">
        <title>The nucleotide sequence of Saccharomyces cerevisiae chromosome IX.</title>
        <authorList>
            <person name="Churcher C.M."/>
            <person name="Bowman S."/>
            <person name="Badcock K."/>
            <person name="Bankier A.T."/>
            <person name="Brown D."/>
            <person name="Chillingworth T."/>
            <person name="Connor R."/>
            <person name="Devlin K."/>
            <person name="Gentles S."/>
            <person name="Hamlin N."/>
            <person name="Harris D.E."/>
            <person name="Horsnell T."/>
            <person name="Hunt S."/>
            <person name="Jagels K."/>
            <person name="Jones M."/>
            <person name="Lye G."/>
            <person name="Moule S."/>
            <person name="Odell C."/>
            <person name="Pearson D."/>
            <person name="Rajandream M.A."/>
            <person name="Rice P."/>
            <person name="Rowley N."/>
            <person name="Skelton J."/>
            <person name="Smith V."/>
            <person name="Walsh S.V."/>
            <person name="Whitehead S."/>
            <person name="Barrell B.G."/>
        </authorList>
    </citation>
    <scope>NUCLEOTIDE SEQUENCE [LARGE SCALE GENOMIC DNA]</scope>
    <source>
        <strain>ATCC 204508 / S288c</strain>
    </source>
</reference>
<reference key="3">
    <citation type="journal article" date="2014" name="G3 (Bethesda)">
        <title>The reference genome sequence of Saccharomyces cerevisiae: Then and now.</title>
        <authorList>
            <person name="Engel S.R."/>
            <person name="Dietrich F.S."/>
            <person name="Fisk D.G."/>
            <person name="Binkley G."/>
            <person name="Balakrishnan R."/>
            <person name="Costanzo M.C."/>
            <person name="Dwight S.S."/>
            <person name="Hitz B.C."/>
            <person name="Karra K."/>
            <person name="Nash R.S."/>
            <person name="Weng S."/>
            <person name="Wong E.D."/>
            <person name="Lloyd P."/>
            <person name="Skrzypek M.S."/>
            <person name="Miyasato S.R."/>
            <person name="Simison M."/>
            <person name="Cherry J.M."/>
        </authorList>
    </citation>
    <scope>GENOME REANNOTATION</scope>
    <source>
        <strain>ATCC 204508 / S288c</strain>
    </source>
</reference>
<reference key="4">
    <citation type="journal article" date="1999" name="J. Cell Biol.">
        <title>Regulation of the actin cytoskeleton organization in yeast by a novel serine/threonine kinase Prk1p.</title>
        <authorList>
            <person name="Zeng G."/>
            <person name="Cai M."/>
        </authorList>
    </citation>
    <scope>FUNCTION</scope>
    <scope>CATALYTIC ACTIVITY</scope>
    <scope>DISRUPTION PHENOTYPE</scope>
    <scope>MUTAGENESIS OF ASP-158</scope>
</reference>
<reference key="5">
    <citation type="journal article" date="1999" name="J. Cell Biol.">
        <title>Novel protein kinases Ark1p and Prk1p associate with and regulate the cortical actin cytoskeleton in budding yeast.</title>
        <authorList>
            <person name="Cope M.J.T.V."/>
            <person name="Yang S."/>
            <person name="Shang C."/>
            <person name="Drubin D.G."/>
        </authorList>
    </citation>
    <scope>FUNCTION</scope>
    <scope>SUBCELLULAR LOCATION</scope>
    <scope>MUTAGENESIS OF LYS-56</scope>
</reference>
<reference key="6">
    <citation type="journal article" date="2001" name="Mol. Biol. Cell">
        <title>In vivo role for actin-regulating kinases in endocytosis and yeast epsin phosphorylation.</title>
        <authorList>
            <person name="Watson H.A."/>
            <person name="Cope M.J.T.V."/>
            <person name="Groen A.C."/>
            <person name="Drubin D.G."/>
            <person name="Wendland B."/>
        </authorList>
    </citation>
    <scope>FUNCTION</scope>
</reference>
<reference key="7">
    <citation type="journal article" date="2001" name="Mol. Biol. Cell">
        <title>Regulation of yeast actin cytoskeleton-regulatory complex Pan1p/Sla1p/End3p by serine/threonine kinase Prk1p.</title>
        <authorList>
            <person name="Zeng G."/>
            <person name="Yu X."/>
            <person name="Cai M."/>
        </authorList>
    </citation>
    <scope>FUNCTION</scope>
    <scope>CATALYTIC ACTIVITY</scope>
    <scope>MUTAGENESIS OF ASP-158</scope>
</reference>
<reference key="8">
    <citation type="journal article" date="2002" name="J. Biol. Chem.">
        <title>Unusual binding properties of the SH3 domain of the yeast actin-binding protein Abp1: structural and functional analysis.</title>
        <authorList>
            <person name="Fazi B."/>
            <person name="Cope M.J.T.V."/>
            <person name="Douangamath A."/>
            <person name="Ferracuti S."/>
            <person name="Schirwitz K."/>
            <person name="Zucconi A."/>
            <person name="Drubin D.G."/>
            <person name="Wilmanns M."/>
            <person name="Cesareni G."/>
            <person name="Castagnoli L."/>
        </authorList>
    </citation>
    <scope>INTERACTION WITH ABP1</scope>
</reference>
<reference key="9">
    <citation type="journal article" date="2003" name="Curr. Biol.">
        <title>The actin-regulating kinase Prk1p negatively regulates Scd5p, a suppressor of clathrin deficiency, in actin organization and endocytosis.</title>
        <authorList>
            <person name="Henry K.R."/>
            <person name="D'Hondt K."/>
            <person name="Chang J.S."/>
            <person name="Nix D.A."/>
            <person name="Cope M.J."/>
            <person name="Chan C.S."/>
            <person name="Drubin D.G."/>
            <person name="Lemmon S.K."/>
        </authorList>
    </citation>
    <scope>FUNCTION</scope>
    <scope>CATALYTIC ACTIVITY</scope>
</reference>
<reference key="10">
    <citation type="journal article" date="2003" name="Mol. Biol. Cell">
        <title>Identification of novel recognition motifs and regulatory targets for the yeast actin-regulating kinase Prk1p.</title>
        <authorList>
            <person name="Huang B."/>
            <person name="Zeng G."/>
            <person name="Ng A.Y."/>
            <person name="Cai M."/>
        </authorList>
    </citation>
    <scope>FUNCTION</scope>
    <scope>CATALYTIC ACTIVITY</scope>
    <scope>MUTAGENESIS OF ASP-158</scope>
</reference>
<reference key="11">
    <citation type="journal article" date="2003" name="Nature">
        <title>Global analysis of protein localization in budding yeast.</title>
        <authorList>
            <person name="Huh W.-K."/>
            <person name="Falvo J.V."/>
            <person name="Gerke L.C."/>
            <person name="Carroll A.S."/>
            <person name="Howson R.W."/>
            <person name="Weissman J.S."/>
            <person name="O'Shea E.K."/>
        </authorList>
    </citation>
    <scope>SUBCELLULAR LOCATION [LARGE SCALE ANALYSIS]</scope>
</reference>
<reference key="12">
    <citation type="journal article" date="2003" name="Nature">
        <title>Global analysis of protein expression in yeast.</title>
        <authorList>
            <person name="Ghaemmaghami S."/>
            <person name="Huh W.-K."/>
            <person name="Bower K."/>
            <person name="Howson R.W."/>
            <person name="Belle A."/>
            <person name="Dephoure N."/>
            <person name="O'Shea E.K."/>
            <person name="Weissman J.S."/>
        </authorList>
    </citation>
    <scope>LEVEL OF PROTEIN EXPRESSION [LARGE SCALE ANALYSIS]</scope>
</reference>
<reference key="13">
    <citation type="journal article" date="2007" name="J. Proteome Res.">
        <title>Large-scale phosphorylation analysis of alpha-factor-arrested Saccharomyces cerevisiae.</title>
        <authorList>
            <person name="Li X."/>
            <person name="Gerber S.A."/>
            <person name="Rudner A.D."/>
            <person name="Beausoleil S.A."/>
            <person name="Haas W."/>
            <person name="Villen J."/>
            <person name="Elias J.E."/>
            <person name="Gygi S.P."/>
        </authorList>
    </citation>
    <scope>IDENTIFICATION BY MASS SPECTROMETRY [LARGE SCALE ANALYSIS]</scope>
    <source>
        <strain>ADR376</strain>
    </source>
</reference>
<reference key="14">
    <citation type="journal article" date="2008" name="Mol. Cell. Proteomics">
        <title>A multidimensional chromatography technology for in-depth phosphoproteome analysis.</title>
        <authorList>
            <person name="Albuquerque C.P."/>
            <person name="Smolka M.B."/>
            <person name="Payne S.H."/>
            <person name="Bafna V."/>
            <person name="Eng J."/>
            <person name="Zhou H."/>
        </authorList>
    </citation>
    <scope>PHOSPHORYLATION [LARGE SCALE ANALYSIS] AT SER-402 AND SER-484</scope>
    <scope>IDENTIFICATION BY MASS SPECTROMETRY [LARGE SCALE ANALYSIS]</scope>
</reference>
<reference key="15">
    <citation type="journal article" date="2009" name="Science">
        <title>Global analysis of Cdk1 substrate phosphorylation sites provides insights into evolution.</title>
        <authorList>
            <person name="Holt L.J."/>
            <person name="Tuch B.B."/>
            <person name="Villen J."/>
            <person name="Johnson A.D."/>
            <person name="Gygi S.P."/>
            <person name="Morgan D.O."/>
        </authorList>
    </citation>
    <scope>PHOSPHORYLATION [LARGE SCALE ANALYSIS] AT SER-402; SER-428; SER-484; THR-553 AND SER-556</scope>
    <scope>IDENTIFICATION BY MASS SPECTROMETRY [LARGE SCALE ANALYSIS]</scope>
</reference>
<feature type="chain" id="PRO_0000086581" description="Actin-regulating kinase PRK1">
    <location>
        <begin position="1"/>
        <end position="810"/>
    </location>
</feature>
<feature type="domain" description="Protein kinase" evidence="1">
    <location>
        <begin position="22"/>
        <end position="298"/>
    </location>
</feature>
<feature type="region of interest" description="Disordered" evidence="3">
    <location>
        <begin position="552"/>
        <end position="668"/>
    </location>
</feature>
<feature type="region of interest" description="Disordered" evidence="3">
    <location>
        <begin position="733"/>
        <end position="761"/>
    </location>
</feature>
<feature type="region of interest" description="Interaction with SH3 domain of ABP1">
    <location>
        <begin position="743"/>
        <end position="756"/>
    </location>
</feature>
<feature type="compositionally biased region" description="Polar residues" evidence="3">
    <location>
        <begin position="553"/>
        <end position="566"/>
    </location>
</feature>
<feature type="compositionally biased region" description="Low complexity" evidence="3">
    <location>
        <begin position="567"/>
        <end position="588"/>
    </location>
</feature>
<feature type="compositionally biased region" description="Basic and acidic residues" evidence="3">
    <location>
        <begin position="594"/>
        <end position="612"/>
    </location>
</feature>
<feature type="compositionally biased region" description="Basic and acidic residues" evidence="3">
    <location>
        <begin position="622"/>
        <end position="639"/>
    </location>
</feature>
<feature type="compositionally biased region" description="Low complexity" evidence="3">
    <location>
        <begin position="645"/>
        <end position="658"/>
    </location>
</feature>
<feature type="compositionally biased region" description="Basic and acidic residues" evidence="3">
    <location>
        <begin position="733"/>
        <end position="748"/>
    </location>
</feature>
<feature type="active site" description="Proton acceptor" evidence="1 2">
    <location>
        <position position="158"/>
    </location>
</feature>
<feature type="binding site" evidence="1">
    <location>
        <begin position="28"/>
        <end position="36"/>
    </location>
    <ligand>
        <name>ATP</name>
        <dbReference type="ChEBI" id="CHEBI:30616"/>
    </ligand>
</feature>
<feature type="binding site" evidence="1">
    <location>
        <position position="56"/>
    </location>
    <ligand>
        <name>ATP</name>
        <dbReference type="ChEBI" id="CHEBI:30616"/>
    </ligand>
</feature>
<feature type="modified residue" description="Phosphoserine" evidence="14 15">
    <location>
        <position position="402"/>
    </location>
</feature>
<feature type="modified residue" description="Phosphoserine" evidence="15">
    <location>
        <position position="428"/>
    </location>
</feature>
<feature type="modified residue" description="Phosphoserine" evidence="14 15">
    <location>
        <position position="484"/>
    </location>
</feature>
<feature type="modified residue" description="Phosphothreonine" evidence="15">
    <location>
        <position position="553"/>
    </location>
</feature>
<feature type="modified residue" description="Phosphoserine" evidence="15">
    <location>
        <position position="556"/>
    </location>
</feature>
<feature type="mutagenesis site" description="Abolishes protein kinase activity." evidence="4">
    <original>K</original>
    <variation>A</variation>
    <location>
        <position position="56"/>
    </location>
</feature>
<feature type="mutagenesis site" description="Loss of catalytic activity." evidence="7 9 12">
    <original>D</original>
    <variation>Y</variation>
    <location>
        <position position="158"/>
    </location>
</feature>
<feature type="sequence conflict" description="In Ref. 1; AAA86529." evidence="13" ref="1">
    <original>A</original>
    <variation>R</variation>
    <location>
        <position position="786"/>
    </location>
</feature>
<accession>P40494</accession>
<accession>D6VVJ2</accession>
<accession>Q02553</accession>
<protein>
    <recommendedName>
        <fullName>Actin-regulating kinase PRK1</fullName>
        <ecNumber evidence="7 8 9 12">2.7.11.1</ecNumber>
    </recommendedName>
    <alternativeName>
        <fullName>p53-regulating kinase 1</fullName>
    </alternativeName>
</protein>
<evidence type="ECO:0000255" key="1">
    <source>
        <dbReference type="PROSITE-ProRule" id="PRU00159"/>
    </source>
</evidence>
<evidence type="ECO:0000255" key="2">
    <source>
        <dbReference type="PROSITE-ProRule" id="PRU10027"/>
    </source>
</evidence>
<evidence type="ECO:0000256" key="3">
    <source>
        <dbReference type="SAM" id="MobiDB-lite"/>
    </source>
</evidence>
<evidence type="ECO:0000269" key="4">
    <source>
    </source>
</evidence>
<evidence type="ECO:0000269" key="5">
    <source>
    </source>
</evidence>
<evidence type="ECO:0000269" key="6">
    <source>
    </source>
</evidence>
<evidence type="ECO:0000269" key="7">
    <source>
    </source>
</evidence>
<evidence type="ECO:0000269" key="8">
    <source>
    </source>
</evidence>
<evidence type="ECO:0000269" key="9">
    <source>
    </source>
</evidence>
<evidence type="ECO:0000269" key="10">
    <source>
    </source>
</evidence>
<evidence type="ECO:0000269" key="11">
    <source>
    </source>
</evidence>
<evidence type="ECO:0000269" key="12">
    <source>
    </source>
</evidence>
<evidence type="ECO:0000305" key="13"/>
<evidence type="ECO:0007744" key="14">
    <source>
    </source>
</evidence>
<evidence type="ECO:0007744" key="15">
    <source>
    </source>
</evidence>
<comment type="function">
    <text evidence="4 6 7 8 9 12">Protein kinase involved in the regulation of actin cytoskeleton organization and endocytosis (PubMed:10087264, PubMed:11694597, PubMed:11739778, PubMed:9885245). Phosphorylates PAN1 which disrupts the interaction between PAN1 and END3, and between PAN1 and SLA1 (PubMed:11739778, PubMed:13679512, PubMed:9885245). Phosphorylates SCD5 (PubMed:12956961, PubMed:13679512). Preferentially, phosphorylates substrates on threonine residues in a [L/I/V/M]-x-x-[Q/N/T/S]-x-T-G motif (PubMed:11739778, PubMed:12956961, PubMed:13679512, PubMed:9885245).</text>
</comment>
<comment type="catalytic activity">
    <reaction evidence="13">
        <text>L-seryl-[protein] + ATP = O-phospho-L-seryl-[protein] + ADP + H(+)</text>
        <dbReference type="Rhea" id="RHEA:17989"/>
        <dbReference type="Rhea" id="RHEA-COMP:9863"/>
        <dbReference type="Rhea" id="RHEA-COMP:11604"/>
        <dbReference type="ChEBI" id="CHEBI:15378"/>
        <dbReference type="ChEBI" id="CHEBI:29999"/>
        <dbReference type="ChEBI" id="CHEBI:30616"/>
        <dbReference type="ChEBI" id="CHEBI:83421"/>
        <dbReference type="ChEBI" id="CHEBI:456216"/>
        <dbReference type="EC" id="2.7.11.1"/>
    </reaction>
</comment>
<comment type="catalytic activity">
    <reaction evidence="7 8 9 12">
        <text>L-threonyl-[protein] + ATP = O-phospho-L-threonyl-[protein] + ADP + H(+)</text>
        <dbReference type="Rhea" id="RHEA:46608"/>
        <dbReference type="Rhea" id="RHEA-COMP:11060"/>
        <dbReference type="Rhea" id="RHEA-COMP:11605"/>
        <dbReference type="ChEBI" id="CHEBI:15378"/>
        <dbReference type="ChEBI" id="CHEBI:30013"/>
        <dbReference type="ChEBI" id="CHEBI:30616"/>
        <dbReference type="ChEBI" id="CHEBI:61977"/>
        <dbReference type="ChEBI" id="CHEBI:456216"/>
        <dbReference type="EC" id="2.7.11.1"/>
    </reaction>
</comment>
<comment type="subunit">
    <text evidence="5">Interacts with ABP1, which is required for proper actin patch localization.</text>
</comment>
<comment type="interaction">
    <interactant intactId="EBI-9703">
        <id>P40494</id>
    </interactant>
    <interactant intactId="EBI-2036">
        <id>P15891</id>
        <label>ABP1</label>
    </interactant>
    <organismsDiffer>false</organismsDiffer>
    <experiments>12</experiments>
</comment>
<comment type="interaction">
    <interactant intactId="EBI-9703">
        <id>P40494</id>
    </interactant>
    <interactant intactId="EBI-13206">
        <id>P80667</id>
        <label>PEX13</label>
    </interactant>
    <organismsDiffer>false</organismsDiffer>
    <experiments>2</experiments>
</comment>
<comment type="subcellular location">
    <subcellularLocation>
        <location evidence="4 10">Cytoplasm</location>
        <location evidence="4 10">Cytoskeleton</location>
        <location evidence="4 10">Actin patch</location>
    </subcellularLocation>
    <text>Cortical actin patches.</text>
</comment>
<comment type="disruption phenotype">
    <text evidence="12">Viable (PubMed:9885245). At the restrictive temperature of 37 degrees Celsius, loss of asymmetric localization of cortical actin patches and, delay in emergence and bud growth resulting in the accumulation of unbudded cells (PubMed:9885245).</text>
</comment>
<comment type="miscellaneous">
    <text evidence="11">Present with 1323 molecules/cell in log phase SD medium.</text>
</comment>
<comment type="similarity">
    <text evidence="1">Belongs to the protein kinase superfamily. Ser/Thr protein kinase family.</text>
</comment>
<organism>
    <name type="scientific">Saccharomyces cerevisiae (strain ATCC 204508 / S288c)</name>
    <name type="common">Baker's yeast</name>
    <dbReference type="NCBI Taxonomy" id="559292"/>
    <lineage>
        <taxon>Eukaryota</taxon>
        <taxon>Fungi</taxon>
        <taxon>Dikarya</taxon>
        <taxon>Ascomycota</taxon>
        <taxon>Saccharomycotina</taxon>
        <taxon>Saccharomycetes</taxon>
        <taxon>Saccharomycetales</taxon>
        <taxon>Saccharomycetaceae</taxon>
        <taxon>Saccharomyces</taxon>
    </lineage>
</organism>
<gene>
    <name type="primary">PRK1</name>
    <name type="synonym">PAK1</name>
    <name type="ordered locus">YIL095W</name>
</gene>
<sequence length="810" mass="91032">MNTPQISLYEPGTILTVGSHHAKIIKYLTSGGFAQVYTAEISPPDPYSNANIACLKRVIVPHKQGLNTLRAEVDAMKLLRNNKHVVSYIDSHAARSVNGIAYEVFVLMEFCERGGLIDFMNTRLQNRLQESEILEIMSQTVQGITAMHALQPPLIHRDIKIENVLISHDGLYKVCDFGSVSGVIRPPRNTQEFNYVQHDILTNTTAQYRSPEMIDLYRGLPIDEKSDIWALGVFLYKICYYTTPFEKSGEAGILHARYQYPSFPQYSDRLKNLIRLMLMEAPSQRPNICQVLEEVSRLQNKPCPIRNFYLLRAMNQNANTQLAGEPSSTTYVPTQKFIPVQSLQSINQPPNMMPVTHVSTTPNLGTFPISINDNNKTEVTAHAGLQVGSHSNLTSPLMKTKSVPLSDEFASLYYKELHPFQKSQTFKSVESFQSPQRKSMPPLSLTPVNNDIFDRVSAINRPNNYVDSETQTIDNMAVPNLKLSPTITSKSLSSTKEIAAPDNINGSKIVRSLSSKLKKVITGESRGNSPIKSRQNTGDSIRSAFGKLRHGFTGNSVNNSRSASFDNNNVNGNGNNTNRRLVSSSTSSFPKFNSDTKRKEESDKNQRLEKRRSMPPSILSDFDQHERNNSRTGSRDYYRSHSPVKKTQASAKTTSKPTLIPDNGNVNINQEKKESIQRRVHNLLKSSDDPVTYKSASGYGKYTDIGTETSNRHSSVRITPITEEKFKKTLKDGVLDIKTKSNGKDKSRPPRPPPKPLHLRTEIQKIRNFSRLQSKKLPIERISSEATETIVDVNVDDLEADFRKRFPSKV</sequence>